<accession>D5JBX1</accession>
<sequence>MELTLTTSLGLAVFVFILFKLLTGSKSTKNSLPEAWRLPIIGHMHHLVGTLPHRGVTDMARKYGSLMHLQLGEVSTIVVSSPRWAKEVLTTYDITFANRPETLTGEIVAYHNTDIVLSPYGEYWRQLRKLCTLELLSAKKVKSFQSLREEECWNLVKEVRSSGSGSPVDLSESIFKLIATILSRAAFGKGIKDQREFTEIVKEILRLTGGFDVADIFPSKKILHHLSGKRAKLTNIHNKLDSLINNIVSEHPGSRTSSSQESLLDVLLRLKDSAELPLTSDNVKAVILDMFGAGTDTSSATIEWAISELIRCPRAMEKVQTELRQALNGKERIQEEDIQELSYLKLVIKETLRLHPPLPLVMPRECREPCVLAGYEIPTKTKLIVNVFAINRDPEYWKDAETFMPERFENSPINIMGSEYEYLPFGAGRRMCPGAALGLANVELPLAHILYYFNWKLPNGARLDELDMSECFGATVQRKSELLLVPTAYKTANNSA</sequence>
<comment type="function">
    <text evidence="6">Involved in the biosynthesis of germacrene-derived sesquiterpene lactones (PubMed:20351109). Catalyzes three consecutive oxidations of germacrene A to produce germacrene A acid (PubMed:20351109). Could also catalyze the three-step oxidation of non-natural substrate amorphadiene to artemisinic acid (PubMed:20351109).</text>
</comment>
<comment type="catalytic activity">
    <reaction evidence="6">
        <text>(+)-(R)-germacrene A + 3 reduced [NADPH--hemoprotein reductase] + 3 O2 = germacra-1(10),4,11(13)-trien-12-oate + 3 oxidized [NADPH--hemoprotein reductase] + 4 H2O + 4 H(+)</text>
        <dbReference type="Rhea" id="RHEA:30303"/>
        <dbReference type="Rhea" id="RHEA-COMP:11964"/>
        <dbReference type="Rhea" id="RHEA-COMP:11965"/>
        <dbReference type="ChEBI" id="CHEBI:15377"/>
        <dbReference type="ChEBI" id="CHEBI:15378"/>
        <dbReference type="ChEBI" id="CHEBI:15379"/>
        <dbReference type="ChEBI" id="CHEBI:41595"/>
        <dbReference type="ChEBI" id="CHEBI:57618"/>
        <dbReference type="ChEBI" id="CHEBI:58210"/>
        <dbReference type="ChEBI" id="CHEBI:61301"/>
        <dbReference type="EC" id="1.14.14.95"/>
    </reaction>
    <physiologicalReaction direction="left-to-right" evidence="6">
        <dbReference type="Rhea" id="RHEA:30304"/>
    </physiologicalReaction>
</comment>
<comment type="cofactor">
    <cofactor evidence="1">
        <name>heme</name>
        <dbReference type="ChEBI" id="CHEBI:30413"/>
    </cofactor>
</comment>
<comment type="pathway">
    <text evidence="8">Secondary metabolite biosynthesis; terpenoid biosynthesis.</text>
</comment>
<comment type="subcellular location">
    <subcellularLocation>
        <location evidence="2">Endoplasmic reticulum membrane</location>
        <topology evidence="2">Single-pass type II membrane protein</topology>
    </subcellularLocation>
</comment>
<comment type="similarity">
    <text evidence="9">Belongs to the cytochrome P450 family.</text>
</comment>
<dbReference type="EC" id="1.14.14.95" evidence="6"/>
<dbReference type="EMBL" id="GU256647">
    <property type="protein sequence ID" value="ADF43083.1"/>
    <property type="molecule type" value="mRNA"/>
</dbReference>
<dbReference type="SMR" id="D5JBX1"/>
<dbReference type="GlyCosmos" id="D5JBX1">
    <property type="glycosylation" value="1 site, No reported glycans"/>
</dbReference>
<dbReference type="BioCyc" id="MetaCyc:MONOMER-15756"/>
<dbReference type="BRENDA" id="1.14.14.95">
    <property type="organism ID" value="12601"/>
</dbReference>
<dbReference type="UniPathway" id="UPA00213"/>
<dbReference type="GO" id="GO:0005789">
    <property type="term" value="C:endoplasmic reticulum membrane"/>
    <property type="evidence" value="ECO:0007669"/>
    <property type="project" value="UniProtKB-SubCell"/>
</dbReference>
<dbReference type="GO" id="GO:0106223">
    <property type="term" value="F:germacrene A hydroxylase activity"/>
    <property type="evidence" value="ECO:0000314"/>
    <property type="project" value="UniProtKB"/>
</dbReference>
<dbReference type="GO" id="GO:0020037">
    <property type="term" value="F:heme binding"/>
    <property type="evidence" value="ECO:0007669"/>
    <property type="project" value="InterPro"/>
</dbReference>
<dbReference type="GO" id="GO:0005506">
    <property type="term" value="F:iron ion binding"/>
    <property type="evidence" value="ECO:0007669"/>
    <property type="project" value="InterPro"/>
</dbReference>
<dbReference type="GO" id="GO:0051762">
    <property type="term" value="P:sesquiterpene biosynthetic process"/>
    <property type="evidence" value="ECO:0000314"/>
    <property type="project" value="UniProtKB"/>
</dbReference>
<dbReference type="GO" id="GO:0016114">
    <property type="term" value="P:terpenoid biosynthetic process"/>
    <property type="evidence" value="ECO:0007669"/>
    <property type="project" value="UniProtKB-UniPathway"/>
</dbReference>
<dbReference type="CDD" id="cd11072">
    <property type="entry name" value="CYP71-like"/>
    <property type="match status" value="1"/>
</dbReference>
<dbReference type="FunFam" id="1.10.630.10:FF:000043">
    <property type="entry name" value="Cytochrome P450 99A2"/>
    <property type="match status" value="1"/>
</dbReference>
<dbReference type="Gene3D" id="1.10.630.10">
    <property type="entry name" value="Cytochrome P450"/>
    <property type="match status" value="1"/>
</dbReference>
<dbReference type="InterPro" id="IPR001128">
    <property type="entry name" value="Cyt_P450"/>
</dbReference>
<dbReference type="InterPro" id="IPR017972">
    <property type="entry name" value="Cyt_P450_CS"/>
</dbReference>
<dbReference type="InterPro" id="IPR002401">
    <property type="entry name" value="Cyt_P450_E_grp-I"/>
</dbReference>
<dbReference type="InterPro" id="IPR036396">
    <property type="entry name" value="Cyt_P450_sf"/>
</dbReference>
<dbReference type="PANTHER" id="PTHR47955">
    <property type="entry name" value="CYTOCHROME P450 FAMILY 71 PROTEIN"/>
    <property type="match status" value="1"/>
</dbReference>
<dbReference type="PANTHER" id="PTHR47955:SF9">
    <property type="entry name" value="PREMNASPIRODIENE OXYGENASE-LIKE"/>
    <property type="match status" value="1"/>
</dbReference>
<dbReference type="Pfam" id="PF00067">
    <property type="entry name" value="p450"/>
    <property type="match status" value="1"/>
</dbReference>
<dbReference type="PRINTS" id="PR00463">
    <property type="entry name" value="EP450I"/>
</dbReference>
<dbReference type="PRINTS" id="PR00385">
    <property type="entry name" value="P450"/>
</dbReference>
<dbReference type="SUPFAM" id="SSF48264">
    <property type="entry name" value="Cytochrome P450"/>
    <property type="match status" value="1"/>
</dbReference>
<dbReference type="PROSITE" id="PS00086">
    <property type="entry name" value="CYTOCHROME_P450"/>
    <property type="match status" value="1"/>
</dbReference>
<reference key="1">
    <citation type="journal article" date="2010" name="J. Biol. Chem.">
        <title>Biochemical conservation and evolution of germacrene A oxidase in asteraceae.</title>
        <authorList>
            <person name="Nguyen D.T."/>
            <person name="Goepfert J.C."/>
            <person name="Ikezawa N."/>
            <person name="Macnevin G."/>
            <person name="Kathiresan M."/>
            <person name="Conrad J."/>
            <person name="Spring O."/>
            <person name="Ro D.-K."/>
        </authorList>
    </citation>
    <scope>NUCLEOTIDE SEQUENCE [MRNA]</scope>
    <scope>FUNCTION</scope>
    <scope>CATALYTIC ACTIVITY</scope>
</reference>
<reference key="2">
    <citation type="journal article" date="2019" name="Nat. Prod. Rep.">
        <title>Non-volatile natural products in plant glandular trichomes: chemistry, biological activities and biosynthesis.</title>
        <authorList>
            <person name="Liu Y."/>
            <person name="Jing S.-X."/>
            <person name="Luo S.-H."/>
            <person name="Li S.-H."/>
        </authorList>
    </citation>
    <scope>PATHWAY</scope>
    <scope>REVIEW</scope>
</reference>
<name>GAO_BARSP</name>
<feature type="chain" id="PRO_0000412764" description="Germacrene A hydroxylase">
    <location>
        <begin position="1"/>
        <end position="496"/>
    </location>
</feature>
<feature type="topological domain" description="Cytoplasmic" evidence="4">
    <location>
        <begin position="1"/>
        <end position="2"/>
    </location>
</feature>
<feature type="transmembrane region" description="Helical; Signal-anchor for type II membrane protein" evidence="4">
    <location>
        <begin position="3"/>
        <end position="23"/>
    </location>
</feature>
<feature type="topological domain" description="Lumenal" evidence="4">
    <location>
        <begin position="24"/>
        <end position="496"/>
    </location>
</feature>
<feature type="binding site" description="axial binding residue" evidence="3">
    <location>
        <position position="432"/>
    </location>
    <ligand>
        <name>heme</name>
        <dbReference type="ChEBI" id="CHEBI:30413"/>
    </ligand>
    <ligandPart>
        <name>Fe</name>
        <dbReference type="ChEBI" id="CHEBI:18248"/>
    </ligandPart>
</feature>
<feature type="glycosylation site" description="N-linked (GlcNAc...) asparagine" evidence="5">
    <location>
        <position position="493"/>
    </location>
</feature>
<proteinExistence type="evidence at protein level"/>
<protein>
    <recommendedName>
        <fullName evidence="7">Germacrene A hydroxylase</fullName>
        <ecNumber evidence="6">1.14.14.95</ecNumber>
    </recommendedName>
    <alternativeName>
        <fullName evidence="7">Germacrene A oxidase</fullName>
        <shortName evidence="7">BsGAO</shortName>
    </alternativeName>
</protein>
<organism>
    <name type="scientific">Barnadesia spinosa</name>
    <name type="common">Spiny barnadesia</name>
    <dbReference type="NCBI Taxonomy" id="171760"/>
    <lineage>
        <taxon>Eukaryota</taxon>
        <taxon>Viridiplantae</taxon>
        <taxon>Streptophyta</taxon>
        <taxon>Embryophyta</taxon>
        <taxon>Tracheophyta</taxon>
        <taxon>Spermatophyta</taxon>
        <taxon>Magnoliopsida</taxon>
        <taxon>eudicotyledons</taxon>
        <taxon>Gunneridae</taxon>
        <taxon>Pentapetalae</taxon>
        <taxon>asterids</taxon>
        <taxon>campanulids</taxon>
        <taxon>Asterales</taxon>
        <taxon>Asteraceae</taxon>
        <taxon>Barnadesioideae</taxon>
        <taxon>Barnadesia</taxon>
    </lineage>
</organism>
<gene>
    <name evidence="7" type="primary">GAO</name>
</gene>
<evidence type="ECO:0000250" key="1"/>
<evidence type="ECO:0000250" key="2">
    <source>
        <dbReference type="UniProtKB" id="D5JBW8"/>
    </source>
</evidence>
<evidence type="ECO:0000250" key="3">
    <source>
        <dbReference type="UniProtKB" id="P04798"/>
    </source>
</evidence>
<evidence type="ECO:0000255" key="4"/>
<evidence type="ECO:0000255" key="5">
    <source>
        <dbReference type="PROSITE-ProRule" id="PRU00498"/>
    </source>
</evidence>
<evidence type="ECO:0000269" key="6">
    <source>
    </source>
</evidence>
<evidence type="ECO:0000303" key="7">
    <source>
    </source>
</evidence>
<evidence type="ECO:0000303" key="8">
    <source>
    </source>
</evidence>
<evidence type="ECO:0000305" key="9"/>
<keyword id="KW-0256">Endoplasmic reticulum</keyword>
<keyword id="KW-0325">Glycoprotein</keyword>
<keyword id="KW-0349">Heme</keyword>
<keyword id="KW-0408">Iron</keyword>
<keyword id="KW-0472">Membrane</keyword>
<keyword id="KW-0479">Metal-binding</keyword>
<keyword id="KW-0503">Monooxygenase</keyword>
<keyword id="KW-0560">Oxidoreductase</keyword>
<keyword id="KW-0735">Signal-anchor</keyword>
<keyword id="KW-0812">Transmembrane</keyword>
<keyword id="KW-1133">Transmembrane helix</keyword>